<comment type="subcellular location">
    <subcellularLocation>
        <location evidence="1">Secreted</location>
    </subcellularLocation>
</comment>
<comment type="tissue specificity">
    <text>Expressed by the venom duct.</text>
</comment>
<comment type="domain">
    <text evidence="1">The presence of a 'disulfide through disulfide knot' structurally defines this protein as a knottin.</text>
</comment>
<comment type="domain">
    <text>The cysteine framework is VI/VII (C-C-CC-C-C).</text>
</comment>
<comment type="similarity">
    <text evidence="3">Belongs to the conotoxin O1 superfamily.</text>
</comment>
<sequence>MKLTCMMIVALLFLTAWTFVTAVDSKNELENRGGWGQAGGWGKLFPMARDEMKNSEVSKLDNKRKCAAAGEACVIPIIGNVFCCKGYCLFVCIS</sequence>
<evidence type="ECO:0000250" key="1"/>
<evidence type="ECO:0000255" key="2"/>
<evidence type="ECO:0000305" key="3"/>
<dbReference type="EMBL" id="DJ379477">
    <property type="status" value="NOT_ANNOTATED_CDS"/>
    <property type="molecule type" value="Unassigned_DNA"/>
</dbReference>
<dbReference type="GO" id="GO:0005576">
    <property type="term" value="C:extracellular region"/>
    <property type="evidence" value="ECO:0007669"/>
    <property type="project" value="UniProtKB-SubCell"/>
</dbReference>
<dbReference type="GO" id="GO:0008200">
    <property type="term" value="F:ion channel inhibitor activity"/>
    <property type="evidence" value="ECO:0007669"/>
    <property type="project" value="InterPro"/>
</dbReference>
<dbReference type="GO" id="GO:0090729">
    <property type="term" value="F:toxin activity"/>
    <property type="evidence" value="ECO:0007669"/>
    <property type="project" value="UniProtKB-KW"/>
</dbReference>
<dbReference type="InterPro" id="IPR004214">
    <property type="entry name" value="Conotoxin"/>
</dbReference>
<dbReference type="Pfam" id="PF02950">
    <property type="entry name" value="Conotoxin"/>
    <property type="match status" value="1"/>
</dbReference>
<reference key="1">
    <citation type="patent" date="2002-11-05" number="JP2003533178">
        <title>O-Superfamily conotoxin peptides.</title>
        <authorList>
            <person name="Hillyard D.R."/>
            <person name="Mcintosh M.J."/>
            <person name="Jones R.M."/>
            <person name="Cartier E.G."/>
            <person name="Watkins M."/>
            <person name="Olivera B.M."/>
            <person name="Layer R.T."/>
        </authorList>
    </citation>
    <scope>NUCLEOTIDE SEQUENCE</scope>
</reference>
<proteinExistence type="evidence at transcript level"/>
<accession>P0DJC6</accession>
<protein>
    <recommendedName>
        <fullName>Conotoxin Qc6.1</fullName>
    </recommendedName>
</protein>
<organism>
    <name type="scientific">Conus quercinus</name>
    <name type="common">Oak cone</name>
    <dbReference type="NCBI Taxonomy" id="101313"/>
    <lineage>
        <taxon>Eukaryota</taxon>
        <taxon>Metazoa</taxon>
        <taxon>Spiralia</taxon>
        <taxon>Lophotrochozoa</taxon>
        <taxon>Mollusca</taxon>
        <taxon>Gastropoda</taxon>
        <taxon>Caenogastropoda</taxon>
        <taxon>Neogastropoda</taxon>
        <taxon>Conoidea</taxon>
        <taxon>Conidae</taxon>
        <taxon>Conus</taxon>
        <taxon>Lividoconus</taxon>
    </lineage>
</organism>
<name>O161_CONQU</name>
<keyword id="KW-0165">Cleavage on pair of basic residues</keyword>
<keyword id="KW-1015">Disulfide bond</keyword>
<keyword id="KW-0960">Knottin</keyword>
<keyword id="KW-0528">Neurotoxin</keyword>
<keyword id="KW-0964">Secreted</keyword>
<keyword id="KW-0732">Signal</keyword>
<keyword id="KW-0800">Toxin</keyword>
<feature type="signal peptide" evidence="2">
    <location>
        <begin position="1"/>
        <end position="22"/>
    </location>
</feature>
<feature type="propeptide" id="PRO_0000415313" evidence="1">
    <location>
        <begin position="23"/>
        <end position="62"/>
    </location>
</feature>
<feature type="peptide" id="PRO_0000415314" description="Conotoxin Qc6.1">
    <location>
        <begin position="65"/>
        <end position="94"/>
    </location>
</feature>
<feature type="disulfide bond" evidence="1">
    <location>
        <begin position="66"/>
        <end position="84"/>
    </location>
</feature>
<feature type="disulfide bond" evidence="1">
    <location>
        <begin position="73"/>
        <end position="88"/>
    </location>
</feature>
<feature type="disulfide bond" evidence="1">
    <location>
        <begin position="83"/>
        <end position="92"/>
    </location>
</feature>